<gene>
    <name type="primary">RPS23</name>
</gene>
<feature type="chain" id="PRO_0000240295" description="Small ribosomal subunit protein uS12">
    <location>
        <begin position="1"/>
        <end position="143"/>
    </location>
</feature>
<feature type="region of interest" description="Disordered" evidence="4">
    <location>
        <begin position="1"/>
        <end position="26"/>
    </location>
</feature>
<feature type="compositionally biased region" description="Basic residues" evidence="4">
    <location>
        <begin position="1"/>
        <end position="20"/>
    </location>
</feature>
<feature type="modified residue" description="N6-succinyllysine" evidence="2">
    <location>
        <position position="54"/>
    </location>
</feature>
<feature type="modified residue" description="3-hydroxyproline" evidence="1">
    <location>
        <position position="62"/>
    </location>
</feature>
<feature type="modified residue" description="N6-acetyllysine" evidence="1">
    <location>
        <position position="135"/>
    </location>
</feature>
<feature type="cross-link" description="Glycyl lysine isopeptide (Lys-Gly) (interchain with G-Cter in SUMO2)" evidence="1">
    <location>
        <position position="37"/>
    </location>
</feature>
<keyword id="KW-0002">3D-structure</keyword>
<keyword id="KW-0007">Acetylation</keyword>
<keyword id="KW-0963">Cytoplasm</keyword>
<keyword id="KW-0256">Endoplasmic reticulum</keyword>
<keyword id="KW-0379">Hydroxylation</keyword>
<keyword id="KW-1017">Isopeptide bond</keyword>
<keyword id="KW-0539">Nucleus</keyword>
<keyword id="KW-1185">Reference proteome</keyword>
<keyword id="KW-0687">Ribonucleoprotein</keyword>
<keyword id="KW-0689">Ribosomal protein</keyword>
<keyword id="KW-0832">Ubl conjugation</keyword>
<reference key="1">
    <citation type="submission" date="2005-08" db="EMBL/GenBank/DDBJ databases">
        <authorList>
            <consortium name="NIH - Mammalian Gene Collection (MGC) project"/>
        </authorList>
    </citation>
    <scope>NUCLEOTIDE SEQUENCE [LARGE SCALE MRNA]</scope>
    <source>
        <strain>Crossbred X Angus</strain>
        <tissue>Ileum</tissue>
    </source>
</reference>
<name>RS23_BOVIN</name>
<proteinExistence type="evidence at protein level"/>
<sequence length="143" mass="15808">MGKCRGLRTARKLRSHRRDQKWHDKQYKKAHLGTALKANPFGGASHAKGIVLEKVGVEAKQPNSAIRKCVRVQLIKNGKKITAFVPNDGCLNFIEENDEVLVAGFGRKGHAVGDIPGVRFKVVKVANVSLLALYKGKKERPRS</sequence>
<protein>
    <recommendedName>
        <fullName evidence="5">Small ribosomal subunit protein uS12</fullName>
    </recommendedName>
    <alternativeName>
        <fullName>40S ribosomal protein S23</fullName>
    </alternativeName>
</protein>
<organism>
    <name type="scientific">Bos taurus</name>
    <name type="common">Bovine</name>
    <dbReference type="NCBI Taxonomy" id="9913"/>
    <lineage>
        <taxon>Eukaryota</taxon>
        <taxon>Metazoa</taxon>
        <taxon>Chordata</taxon>
        <taxon>Craniata</taxon>
        <taxon>Vertebrata</taxon>
        <taxon>Euteleostomi</taxon>
        <taxon>Mammalia</taxon>
        <taxon>Eutheria</taxon>
        <taxon>Laurasiatheria</taxon>
        <taxon>Artiodactyla</taxon>
        <taxon>Ruminantia</taxon>
        <taxon>Pecora</taxon>
        <taxon>Bovidae</taxon>
        <taxon>Bovinae</taxon>
        <taxon>Bos</taxon>
    </lineage>
</organism>
<evidence type="ECO:0000250" key="1">
    <source>
        <dbReference type="UniProtKB" id="P62266"/>
    </source>
</evidence>
<evidence type="ECO:0000250" key="2">
    <source>
        <dbReference type="UniProtKB" id="P62267"/>
    </source>
</evidence>
<evidence type="ECO:0000250" key="3">
    <source>
        <dbReference type="UniProtKB" id="Q6SA96"/>
    </source>
</evidence>
<evidence type="ECO:0000256" key="4">
    <source>
        <dbReference type="SAM" id="MobiDB-lite"/>
    </source>
</evidence>
<evidence type="ECO:0000305" key="5"/>
<dbReference type="EMBL" id="BC102049">
    <property type="protein sequence ID" value="AAI02050.1"/>
    <property type="molecule type" value="mRNA"/>
</dbReference>
<dbReference type="RefSeq" id="NP_001029862.1">
    <property type="nucleotide sequence ID" value="NM_001034690.2"/>
</dbReference>
<dbReference type="PDB" id="6MTD">
    <property type="method" value="EM"/>
    <property type="resolution" value="3.30 A"/>
    <property type="chains" value="XX=2-142"/>
</dbReference>
<dbReference type="PDB" id="6MTE">
    <property type="method" value="EM"/>
    <property type="resolution" value="3.40 A"/>
    <property type="chains" value="XX=2-142"/>
</dbReference>
<dbReference type="PDBsum" id="6MTD"/>
<dbReference type="PDBsum" id="6MTE"/>
<dbReference type="EMDB" id="EMD-9240"/>
<dbReference type="EMDB" id="EMD-9242"/>
<dbReference type="SMR" id="Q3T199"/>
<dbReference type="FunCoup" id="Q3T199">
    <property type="interactions" value="3029"/>
</dbReference>
<dbReference type="STRING" id="9913.ENSBTAP00000017770"/>
<dbReference type="PaxDb" id="9913-ENSBTAP00000017770"/>
<dbReference type="PeptideAtlas" id="Q3T199"/>
<dbReference type="Ensembl" id="ENSBTAT00000017770.4">
    <property type="protein sequence ID" value="ENSBTAP00000017770.3"/>
    <property type="gene ID" value="ENSBTAG00000013358.7"/>
</dbReference>
<dbReference type="GeneID" id="540129"/>
<dbReference type="KEGG" id="bta:540129"/>
<dbReference type="CTD" id="6228"/>
<dbReference type="VEuPathDB" id="HostDB:ENSBTAG00000013358"/>
<dbReference type="eggNOG" id="KOG1749">
    <property type="taxonomic scope" value="Eukaryota"/>
</dbReference>
<dbReference type="GeneTree" id="ENSGT00550000074784"/>
<dbReference type="HOGENOM" id="CLU_115574_0_1_1"/>
<dbReference type="InParanoid" id="Q3T199"/>
<dbReference type="OMA" id="KFRWSQR"/>
<dbReference type="OrthoDB" id="9758353at2759"/>
<dbReference type="TreeFam" id="TF300871"/>
<dbReference type="Reactome" id="R-BTA-156827">
    <property type="pathway name" value="L13a-mediated translational silencing of Ceruloplasmin expression"/>
</dbReference>
<dbReference type="Reactome" id="R-BTA-1799339">
    <property type="pathway name" value="SRP-dependent cotranslational protein targeting to membrane"/>
</dbReference>
<dbReference type="Reactome" id="R-BTA-6791226">
    <property type="pathway name" value="Major pathway of rRNA processing in the nucleolus and cytosol"/>
</dbReference>
<dbReference type="Reactome" id="R-BTA-72649">
    <property type="pathway name" value="Translation initiation complex formation"/>
</dbReference>
<dbReference type="Reactome" id="R-BTA-72689">
    <property type="pathway name" value="Formation of a pool of free 40S subunits"/>
</dbReference>
<dbReference type="Reactome" id="R-BTA-72695">
    <property type="pathway name" value="Formation of the ternary complex, and subsequently, the 43S complex"/>
</dbReference>
<dbReference type="Reactome" id="R-BTA-72702">
    <property type="pathway name" value="Ribosomal scanning and start codon recognition"/>
</dbReference>
<dbReference type="Reactome" id="R-BTA-72706">
    <property type="pathway name" value="GTP hydrolysis and joining of the 60S ribosomal subunit"/>
</dbReference>
<dbReference type="Reactome" id="R-BTA-9629569">
    <property type="pathway name" value="Protein hydroxylation"/>
</dbReference>
<dbReference type="Reactome" id="R-BTA-975956">
    <property type="pathway name" value="Nonsense Mediated Decay (NMD) independent of the Exon Junction Complex (EJC)"/>
</dbReference>
<dbReference type="Reactome" id="R-BTA-975957">
    <property type="pathway name" value="Nonsense Mediated Decay (NMD) enhanced by the Exon Junction Complex (EJC)"/>
</dbReference>
<dbReference type="Proteomes" id="UP000009136">
    <property type="component" value="Chromosome 7"/>
</dbReference>
<dbReference type="Bgee" id="ENSBTAG00000013358">
    <property type="expression patterns" value="Expressed in adenohypophysis and 103 other cell types or tissues"/>
</dbReference>
<dbReference type="GO" id="GO:0022627">
    <property type="term" value="C:cytosolic small ribosomal subunit"/>
    <property type="evidence" value="ECO:0000250"/>
    <property type="project" value="UniProtKB"/>
</dbReference>
<dbReference type="GO" id="GO:0005730">
    <property type="term" value="C:nucleolus"/>
    <property type="evidence" value="ECO:0007669"/>
    <property type="project" value="UniProtKB-SubCell"/>
</dbReference>
<dbReference type="GO" id="GO:0005840">
    <property type="term" value="C:ribosome"/>
    <property type="evidence" value="ECO:0000318"/>
    <property type="project" value="GO_Central"/>
</dbReference>
<dbReference type="GO" id="GO:0005791">
    <property type="term" value="C:rough endoplasmic reticulum"/>
    <property type="evidence" value="ECO:0007669"/>
    <property type="project" value="UniProtKB-SubCell"/>
</dbReference>
<dbReference type="GO" id="GO:0032040">
    <property type="term" value="C:small-subunit processome"/>
    <property type="evidence" value="ECO:0000250"/>
    <property type="project" value="UniProtKB"/>
</dbReference>
<dbReference type="GO" id="GO:0045202">
    <property type="term" value="C:synapse"/>
    <property type="evidence" value="ECO:0007669"/>
    <property type="project" value="Ensembl"/>
</dbReference>
<dbReference type="GO" id="GO:0003735">
    <property type="term" value="F:structural constituent of ribosome"/>
    <property type="evidence" value="ECO:0000250"/>
    <property type="project" value="UniProtKB"/>
</dbReference>
<dbReference type="GO" id="GO:0002181">
    <property type="term" value="P:cytoplasmic translation"/>
    <property type="evidence" value="ECO:0000250"/>
    <property type="project" value="UniProtKB"/>
</dbReference>
<dbReference type="GO" id="GO:1990145">
    <property type="term" value="P:maintenance of translational fidelity"/>
    <property type="evidence" value="ECO:0000250"/>
    <property type="project" value="UniProtKB"/>
</dbReference>
<dbReference type="GO" id="GO:0042274">
    <property type="term" value="P:ribosomal small subunit biogenesis"/>
    <property type="evidence" value="ECO:0000250"/>
    <property type="project" value="UniProtKB"/>
</dbReference>
<dbReference type="GO" id="GO:0034063">
    <property type="term" value="P:stress granule assembly"/>
    <property type="evidence" value="ECO:0007669"/>
    <property type="project" value="Ensembl"/>
</dbReference>
<dbReference type="GO" id="GO:0006412">
    <property type="term" value="P:translation"/>
    <property type="evidence" value="ECO:0000250"/>
    <property type="project" value="UniProtKB"/>
</dbReference>
<dbReference type="CDD" id="cd03367">
    <property type="entry name" value="Ribosomal_S23"/>
    <property type="match status" value="1"/>
</dbReference>
<dbReference type="FunFam" id="2.40.50.140:FF:000007">
    <property type="entry name" value="40S ribosomal protein S23"/>
    <property type="match status" value="1"/>
</dbReference>
<dbReference type="Gene3D" id="2.40.50.140">
    <property type="entry name" value="Nucleic acid-binding proteins"/>
    <property type="match status" value="1"/>
</dbReference>
<dbReference type="InterPro" id="IPR012340">
    <property type="entry name" value="NA-bd_OB-fold"/>
</dbReference>
<dbReference type="InterPro" id="IPR006032">
    <property type="entry name" value="Ribosomal_uS12"/>
</dbReference>
<dbReference type="InterPro" id="IPR005680">
    <property type="entry name" value="Ribosomal_uS12_euk/arc"/>
</dbReference>
<dbReference type="NCBIfam" id="NF003254">
    <property type="entry name" value="PRK04211.1"/>
    <property type="match status" value="1"/>
</dbReference>
<dbReference type="NCBIfam" id="TIGR00982">
    <property type="entry name" value="uS12_E_A"/>
    <property type="match status" value="1"/>
</dbReference>
<dbReference type="PANTHER" id="PTHR11652">
    <property type="entry name" value="30S RIBOSOMAL PROTEIN S12 FAMILY MEMBER"/>
    <property type="match status" value="1"/>
</dbReference>
<dbReference type="Pfam" id="PF00164">
    <property type="entry name" value="Ribosom_S12_S23"/>
    <property type="match status" value="1"/>
</dbReference>
<dbReference type="PIRSF" id="PIRSF002133">
    <property type="entry name" value="Ribosomal_S12/S23"/>
    <property type="match status" value="1"/>
</dbReference>
<dbReference type="SUPFAM" id="SSF50249">
    <property type="entry name" value="Nucleic acid-binding proteins"/>
    <property type="match status" value="1"/>
</dbReference>
<dbReference type="PROSITE" id="PS00055">
    <property type="entry name" value="RIBOSOMAL_S12"/>
    <property type="match status" value="1"/>
</dbReference>
<comment type="function">
    <text evidence="1">Component of the ribosome, a large ribonucleoprotein complex responsible for the synthesis of proteins in the cell. The small ribosomal subunit (SSU) binds messenger RNAs (mRNAs) and translates the encoded message by selecting cognate aminoacyl-transfer RNA (tRNA) molecules. The large subunit (LSU) contains the ribosomal catalytic site termed the peptidyl transferase center (PTC), which catalyzes the formation of peptide bonds, thereby polymerizing the amino acids delivered by tRNAs into a polypeptide chain. The nascent polypeptides leave the ribosome through a tunnel in the LSU and interact with protein factors that function in enzymatic processing, targeting, and the membrane insertion of nascent chains at the exit of the ribosomal tunnel. Plays an important role in translational accuracy. Part of the small subunit (SSU) processome, first precursor of the small eukaryotic ribosomal subunit. During the assembly of the SSU processome in the nucleolus, many ribosome biogenesis factors, an RNA chaperone and ribosomal proteins associate with the nascent pre-rRNA and work in concert to generate RNA folding, modifications, rearrangements and cleavage as well as targeted degradation of pre-ribosomal RNA by the RNA exosome.</text>
</comment>
<comment type="subunit">
    <text evidence="1">Component of the 40S small ribosomal subunit. Part of the small subunit (SSU) processome, composed of more than 70 proteins and the RNA chaperone small nucleolar RNA (snoRNA) U3.</text>
</comment>
<comment type="subcellular location">
    <subcellularLocation>
        <location evidence="1">Cytoplasm</location>
        <location evidence="1">Cytosol</location>
    </subcellularLocation>
    <subcellularLocation>
        <location evidence="1">Cytoplasm</location>
    </subcellularLocation>
    <subcellularLocation>
        <location evidence="3">Rough endoplasmic reticulum</location>
    </subcellularLocation>
    <subcellularLocation>
        <location evidence="1">Nucleus</location>
        <location evidence="1">Nucleolus</location>
    </subcellularLocation>
    <text evidence="1 3">Detected on cytosolic polysomes (By similarity). Detected in ribosomes that are associated with the rough endoplasmic reticulum (By similarity).</text>
</comment>
<comment type="PTM">
    <text evidence="1">Hydroxylation at Pro-62 affects translation termination efficiency.</text>
</comment>
<comment type="similarity">
    <text evidence="5">Belongs to the universal ribosomal protein uS12 family.</text>
</comment>
<accession>Q3T199</accession>